<dbReference type="EC" id="3.1.-.-" evidence="2"/>
<dbReference type="EMBL" id="CP000300">
    <property type="protein sequence ID" value="ABE52795.1"/>
    <property type="molecule type" value="Genomic_DNA"/>
</dbReference>
<dbReference type="RefSeq" id="WP_011499938.1">
    <property type="nucleotide sequence ID" value="NC_007955.1"/>
</dbReference>
<dbReference type="SMR" id="Q12UT1"/>
<dbReference type="STRING" id="259564.Mbur_1913"/>
<dbReference type="GeneID" id="3997705"/>
<dbReference type="KEGG" id="mbu:Mbur_1913"/>
<dbReference type="HOGENOM" id="CLU_032444_0_0_2"/>
<dbReference type="OrthoDB" id="9593at2157"/>
<dbReference type="Proteomes" id="UP000001979">
    <property type="component" value="Chromosome"/>
</dbReference>
<dbReference type="GO" id="GO:0008409">
    <property type="term" value="F:5'-3' exonuclease activity"/>
    <property type="evidence" value="ECO:0007669"/>
    <property type="project" value="UniProtKB-UniRule"/>
</dbReference>
<dbReference type="GO" id="GO:0017108">
    <property type="term" value="F:5'-flap endonuclease activity"/>
    <property type="evidence" value="ECO:0007669"/>
    <property type="project" value="UniProtKB-UniRule"/>
</dbReference>
<dbReference type="GO" id="GO:0003677">
    <property type="term" value="F:DNA binding"/>
    <property type="evidence" value="ECO:0007669"/>
    <property type="project" value="UniProtKB-UniRule"/>
</dbReference>
<dbReference type="GO" id="GO:0000287">
    <property type="term" value="F:magnesium ion binding"/>
    <property type="evidence" value="ECO:0007669"/>
    <property type="project" value="UniProtKB-UniRule"/>
</dbReference>
<dbReference type="GO" id="GO:0006281">
    <property type="term" value="P:DNA repair"/>
    <property type="evidence" value="ECO:0007669"/>
    <property type="project" value="UniProtKB-UniRule"/>
</dbReference>
<dbReference type="GO" id="GO:0043137">
    <property type="term" value="P:DNA replication, removal of RNA primer"/>
    <property type="evidence" value="ECO:0007669"/>
    <property type="project" value="UniProtKB-UniRule"/>
</dbReference>
<dbReference type="CDD" id="cd09903">
    <property type="entry name" value="H3TH_FEN1-Arc"/>
    <property type="match status" value="1"/>
</dbReference>
<dbReference type="CDD" id="cd09867">
    <property type="entry name" value="PIN_FEN1"/>
    <property type="match status" value="1"/>
</dbReference>
<dbReference type="FunFam" id="3.40.50.1010:FF:000016">
    <property type="entry name" value="Flap endonuclease 1"/>
    <property type="match status" value="1"/>
</dbReference>
<dbReference type="Gene3D" id="1.10.150.20">
    <property type="entry name" value="5' to 3' exonuclease, C-terminal subdomain"/>
    <property type="match status" value="1"/>
</dbReference>
<dbReference type="Gene3D" id="3.40.50.1010">
    <property type="entry name" value="5'-nuclease"/>
    <property type="match status" value="1"/>
</dbReference>
<dbReference type="HAMAP" id="MF_00614">
    <property type="entry name" value="Fen"/>
    <property type="match status" value="1"/>
</dbReference>
<dbReference type="InterPro" id="IPR036279">
    <property type="entry name" value="5-3_exonuclease_C_sf"/>
</dbReference>
<dbReference type="InterPro" id="IPR023426">
    <property type="entry name" value="Flap_endonuc"/>
</dbReference>
<dbReference type="InterPro" id="IPR019973">
    <property type="entry name" value="Flap_endonuc_arc"/>
</dbReference>
<dbReference type="InterPro" id="IPR008918">
    <property type="entry name" value="HhH2"/>
</dbReference>
<dbReference type="InterPro" id="IPR029060">
    <property type="entry name" value="PIN-like_dom_sf"/>
</dbReference>
<dbReference type="InterPro" id="IPR006086">
    <property type="entry name" value="XPG-I_dom"/>
</dbReference>
<dbReference type="InterPro" id="IPR006084">
    <property type="entry name" value="XPG/Rad2"/>
</dbReference>
<dbReference type="InterPro" id="IPR019974">
    <property type="entry name" value="XPG_CS"/>
</dbReference>
<dbReference type="InterPro" id="IPR006085">
    <property type="entry name" value="XPG_DNA_repair_N"/>
</dbReference>
<dbReference type="NCBIfam" id="TIGR03674">
    <property type="entry name" value="fen_arch"/>
    <property type="match status" value="1"/>
</dbReference>
<dbReference type="PANTHER" id="PTHR11081:SF9">
    <property type="entry name" value="FLAP ENDONUCLEASE 1"/>
    <property type="match status" value="1"/>
</dbReference>
<dbReference type="PANTHER" id="PTHR11081">
    <property type="entry name" value="FLAP ENDONUCLEASE FAMILY MEMBER"/>
    <property type="match status" value="1"/>
</dbReference>
<dbReference type="Pfam" id="PF00867">
    <property type="entry name" value="XPG_I"/>
    <property type="match status" value="1"/>
</dbReference>
<dbReference type="Pfam" id="PF00752">
    <property type="entry name" value="XPG_N"/>
    <property type="match status" value="1"/>
</dbReference>
<dbReference type="PRINTS" id="PR00853">
    <property type="entry name" value="XPGRADSUPER"/>
</dbReference>
<dbReference type="SMART" id="SM00279">
    <property type="entry name" value="HhH2"/>
    <property type="match status" value="1"/>
</dbReference>
<dbReference type="SMART" id="SM00484">
    <property type="entry name" value="XPGI"/>
    <property type="match status" value="1"/>
</dbReference>
<dbReference type="SMART" id="SM00485">
    <property type="entry name" value="XPGN"/>
    <property type="match status" value="1"/>
</dbReference>
<dbReference type="SUPFAM" id="SSF47807">
    <property type="entry name" value="5' to 3' exonuclease, C-terminal subdomain"/>
    <property type="match status" value="1"/>
</dbReference>
<dbReference type="SUPFAM" id="SSF88723">
    <property type="entry name" value="PIN domain-like"/>
    <property type="match status" value="1"/>
</dbReference>
<dbReference type="PROSITE" id="PS00841">
    <property type="entry name" value="XPG_1"/>
    <property type="match status" value="1"/>
</dbReference>
<proteinExistence type="inferred from homology"/>
<protein>
    <recommendedName>
        <fullName evidence="2">Flap endonuclease 1</fullName>
        <shortName evidence="2">FEN-1</shortName>
        <ecNumber evidence="2">3.1.-.-</ecNumber>
    </recommendedName>
    <alternativeName>
        <fullName evidence="2">Flap structure-specific endonuclease 1</fullName>
    </alternativeName>
</protein>
<reference key="1">
    <citation type="journal article" date="2009" name="ISME J.">
        <title>The genome sequence of the psychrophilic archaeon, Methanococcoides burtonii: the role of genome evolution in cold adaptation.</title>
        <authorList>
            <person name="Allen M.A."/>
            <person name="Lauro F.M."/>
            <person name="Williams T.J."/>
            <person name="Burg D."/>
            <person name="Siddiqui K.S."/>
            <person name="De Francisci D."/>
            <person name="Chong K.W."/>
            <person name="Pilak O."/>
            <person name="Chew H.H."/>
            <person name="De Maere M.Z."/>
            <person name="Ting L."/>
            <person name="Katrib M."/>
            <person name="Ng C."/>
            <person name="Sowers K.R."/>
            <person name="Galperin M.Y."/>
            <person name="Anderson I.J."/>
            <person name="Ivanova N."/>
            <person name="Dalin E."/>
            <person name="Martinez M."/>
            <person name="Lapidus A."/>
            <person name="Hauser L."/>
            <person name="Land M."/>
            <person name="Thomas T."/>
            <person name="Cavicchioli R."/>
        </authorList>
    </citation>
    <scope>NUCLEOTIDE SEQUENCE [LARGE SCALE GENOMIC DNA]</scope>
    <source>
        <strain>DSM 6242 / NBRC 107633 / OCM 468 / ACE-M</strain>
    </source>
</reference>
<feature type="chain" id="PRO_1000061323" description="Flap endonuclease 1">
    <location>
        <begin position="1"/>
        <end position="338"/>
    </location>
</feature>
<feature type="region of interest" description="N-domain">
    <location>
        <begin position="1"/>
        <end position="98"/>
    </location>
</feature>
<feature type="region of interest" description="I-domain">
    <location>
        <begin position="116"/>
        <end position="257"/>
    </location>
</feature>
<feature type="region of interest" description="Interaction with PCNA" evidence="2">
    <location>
        <begin position="330"/>
        <end position="338"/>
    </location>
</feature>
<feature type="binding site" evidence="2">
    <location>
        <position position="27"/>
    </location>
    <ligand>
        <name>Mg(2+)</name>
        <dbReference type="ChEBI" id="CHEBI:18420"/>
        <label>1</label>
    </ligand>
</feature>
<feature type="binding site" evidence="2">
    <location>
        <position position="80"/>
    </location>
    <ligand>
        <name>Mg(2+)</name>
        <dbReference type="ChEBI" id="CHEBI:18420"/>
        <label>1</label>
    </ligand>
</feature>
<feature type="binding site" evidence="2">
    <location>
        <position position="152"/>
    </location>
    <ligand>
        <name>Mg(2+)</name>
        <dbReference type="ChEBI" id="CHEBI:18420"/>
        <label>1</label>
    </ligand>
</feature>
<feature type="binding site" evidence="2">
    <location>
        <position position="154"/>
    </location>
    <ligand>
        <name>Mg(2+)</name>
        <dbReference type="ChEBI" id="CHEBI:18420"/>
        <label>1</label>
    </ligand>
</feature>
<feature type="binding site" evidence="2">
    <location>
        <position position="173"/>
    </location>
    <ligand>
        <name>Mg(2+)</name>
        <dbReference type="ChEBI" id="CHEBI:18420"/>
        <label>2</label>
    </ligand>
</feature>
<feature type="binding site" evidence="2">
    <location>
        <position position="175"/>
    </location>
    <ligand>
        <name>Mg(2+)</name>
        <dbReference type="ChEBI" id="CHEBI:18420"/>
        <label>2</label>
    </ligand>
</feature>
<feature type="binding site" evidence="2">
    <location>
        <position position="236"/>
    </location>
    <ligand>
        <name>Mg(2+)</name>
        <dbReference type="ChEBI" id="CHEBI:18420"/>
        <label>2</label>
    </ligand>
</feature>
<sequence>MGTDIGDLLLKDTIEIAGLSNKVVAIDAYNTLYQFLSIIRQRDGTPLKDSRGQITSHLSGILYRLTSLIEAGVKPIFVFDGKPPDFKSDTLAKRHEVRESATAKWEDAKAQGLEEEAYKYAQASSKVTREMIDDSVRLLELMGIPYVKAPSEGEAQASYMVQKGDADYIGSQDYDSFLFGAPQVVRNLTITGKRKLPKKNIYVDVKPEVLSLVDSLGELGITRQQLIDIAMCVGTDYNTGLENIGPKRALKLVKEHGDIKVVLKELGKDIEDLDAKRDFFMNPPVTDDYELKWIKPDRAGVIDLLCKKHDFSEERVNKALDRLEANIGGSQSTLDQWF</sequence>
<evidence type="ECO:0000250" key="1"/>
<evidence type="ECO:0000255" key="2">
    <source>
        <dbReference type="HAMAP-Rule" id="MF_00614"/>
    </source>
</evidence>
<accession>Q12UT1</accession>
<comment type="function">
    <text evidence="1">Structure-specific nuclease with 5'-flap endonuclease and 5'-3' exonuclease activities involved in DNA replication and repair. During DNA replication, cleaves the 5'-overhanging flap structure that is generated by displacement synthesis when DNA polymerase encounters the 5'-end of a downstream Okazaki fragment. Binds the unpaired 3'-DNA end and kinks the DNA to facilitate 5' cleavage specificity. Cleaves one nucleotide into the double-stranded DNA from the junction in flap DNA, leaving a nick for ligation. Also involved in the base excision repair (BER) pathway. Acts as a genome stabilization factor that prevents flaps from equilibrating into structures that lead to duplications and deletions. Also possesses 5'-3' exonuclease activity on nicked or gapped double-stranded DNA (By similarity).</text>
</comment>
<comment type="cofactor">
    <cofactor evidence="2">
        <name>Mg(2+)</name>
        <dbReference type="ChEBI" id="CHEBI:18420"/>
    </cofactor>
    <text evidence="2">Binds 2 magnesium ions per subunit. They probably participate in the reaction catalyzed by the enzyme. May bind an additional third magnesium ion after substrate binding.</text>
</comment>
<comment type="subunit">
    <text evidence="2">Interacts with PCNA. PCNA stimulates the nuclease activity without altering cleavage specificity.</text>
</comment>
<comment type="similarity">
    <text evidence="2">Belongs to the XPG/RAD2 endonuclease family. FEN1 subfamily.</text>
</comment>
<name>FEN_METBU</name>
<keyword id="KW-0227">DNA damage</keyword>
<keyword id="KW-0234">DNA repair</keyword>
<keyword id="KW-0235">DNA replication</keyword>
<keyword id="KW-0255">Endonuclease</keyword>
<keyword id="KW-0269">Exonuclease</keyword>
<keyword id="KW-0378">Hydrolase</keyword>
<keyword id="KW-0460">Magnesium</keyword>
<keyword id="KW-0479">Metal-binding</keyword>
<keyword id="KW-0540">Nuclease</keyword>
<gene>
    <name evidence="2" type="primary">fen</name>
    <name type="ordered locus">Mbur_1913</name>
</gene>
<organism>
    <name type="scientific">Methanococcoides burtonii (strain DSM 6242 / NBRC 107633 / OCM 468 / ACE-M)</name>
    <dbReference type="NCBI Taxonomy" id="259564"/>
    <lineage>
        <taxon>Archaea</taxon>
        <taxon>Methanobacteriati</taxon>
        <taxon>Methanobacteriota</taxon>
        <taxon>Stenosarchaea group</taxon>
        <taxon>Methanomicrobia</taxon>
        <taxon>Methanosarcinales</taxon>
        <taxon>Methanosarcinaceae</taxon>
        <taxon>Methanococcoides</taxon>
    </lineage>
</organism>